<protein>
    <recommendedName>
        <fullName evidence="4">Immune-associated nucleotide-binding protein 4</fullName>
        <shortName evidence="4">AtIAN4</shortName>
    </recommendedName>
    <alternativeName>
        <fullName evidence="5">AIG1-like protein</fullName>
    </alternativeName>
</protein>
<keyword id="KW-0025">Alternative splicing</keyword>
<keyword id="KW-0175">Coiled coil</keyword>
<keyword id="KW-0342">GTP-binding</keyword>
<keyword id="KW-0547">Nucleotide-binding</keyword>
<keyword id="KW-1185">Reference proteome</keyword>
<accession>Q9C8U7</accession>
<name>IAN4_ARATH</name>
<gene>
    <name evidence="4" type="primary">IAN4</name>
    <name evidence="7" type="ordered locus">At1g33900</name>
    <name evidence="8" type="ORF">T3M13.8</name>
</gene>
<feature type="chain" id="PRO_0000438028" description="Immune-associated nucleotide-binding protein 4">
    <location>
        <begin position="1"/>
        <end position="326"/>
    </location>
</feature>
<feature type="domain" description="AIG1-type G" evidence="3">
    <location>
        <begin position="17"/>
        <end position="225"/>
    </location>
</feature>
<feature type="region of interest" description="G1" evidence="3">
    <location>
        <begin position="26"/>
        <end position="33"/>
    </location>
</feature>
<feature type="region of interest" description="G2" evidence="3">
    <location>
        <begin position="53"/>
        <end position="57"/>
    </location>
</feature>
<feature type="region of interest" description="G3" evidence="3">
    <location>
        <begin position="75"/>
        <end position="78"/>
    </location>
</feature>
<feature type="region of interest" description="G4" evidence="3">
    <location>
        <begin position="145"/>
        <end position="148"/>
    </location>
</feature>
<feature type="region of interest" description="G5" evidence="3">
    <location>
        <begin position="184"/>
        <end position="186"/>
    </location>
</feature>
<feature type="coiled-coil region" evidence="2">
    <location>
        <begin position="217"/>
        <end position="241"/>
    </location>
</feature>
<feature type="binding site" evidence="1">
    <location>
        <begin position="26"/>
        <end position="34"/>
    </location>
    <ligand>
        <name>GTP</name>
        <dbReference type="ChEBI" id="CHEBI:37565"/>
    </ligand>
</feature>
<feature type="binding site" evidence="1">
    <location>
        <position position="47"/>
    </location>
    <ligand>
        <name>GTP</name>
        <dbReference type="ChEBI" id="CHEBI:37565"/>
    </ligand>
</feature>
<feature type="binding site" evidence="1">
    <location>
        <position position="185"/>
    </location>
    <ligand>
        <name>GTP</name>
        <dbReference type="ChEBI" id="CHEBI:37565"/>
    </ligand>
</feature>
<comment type="alternative products">
    <event type="alternative splicing"/>
    <isoform>
        <id>Q9C8U7-1</id>
        <name>1</name>
        <sequence type="displayed"/>
    </isoform>
    <text evidence="5">A number of isoforms are produced.</text>
</comment>
<comment type="tissue specificity">
    <text evidence="6">Expressed in radicles of the germinating seeds.</text>
</comment>
<comment type="developmental stage">
    <text evidence="6">Expressed at the early flowering stage and at the late stage of silique development.</text>
</comment>
<comment type="induction">
    <text evidence="6">Up-regulated by brassinolides. Down-regulated by 2-aminoethoxyvinylglycine (AVG), high CO(2), isoxaben, and propiconazole treatments.</text>
</comment>
<comment type="similarity">
    <text evidence="5">Belongs to the TRAFAC class TrmE-Era-EngA-EngB-Septin-like GTPase superfamily. AIG1/Toc34/Toc159-like paraseptin GTPase family. IAN subfamily.</text>
</comment>
<sequence length="326" mass="36397">MAGLEDTTDLRLPSASEPIKNIVLVGRTGNGKSATGNSLIGKQVFRSETRATGVTMKCETCVAVTPCGTGINVIDTPGLFDLSVSAEYLSQEIINCLVLAEDGLHAVVLVLSVRTRISQEEEATLNTLQVIFGSQIIDYLVVLFTGGDELEANNMTLDDYLSKGCPEFLKTVLRLCGGRRILFDNRTTDEGKKVKQVQELLAHVAAIEKSTSGIPFTDEMHRKIQKEAETLREQQKEVESKDLAAAEIEKWKKHYQTEHDKNMNMMAEMLGNRLREDSERQEKMLLALRDNLEISQRQNKLNELTDNEPDLIHCGVSLRRMPCNML</sequence>
<organism>
    <name type="scientific">Arabidopsis thaliana</name>
    <name type="common">Mouse-ear cress</name>
    <dbReference type="NCBI Taxonomy" id="3702"/>
    <lineage>
        <taxon>Eukaryota</taxon>
        <taxon>Viridiplantae</taxon>
        <taxon>Streptophyta</taxon>
        <taxon>Embryophyta</taxon>
        <taxon>Tracheophyta</taxon>
        <taxon>Spermatophyta</taxon>
        <taxon>Magnoliopsida</taxon>
        <taxon>eudicotyledons</taxon>
        <taxon>Gunneridae</taxon>
        <taxon>Pentapetalae</taxon>
        <taxon>rosids</taxon>
        <taxon>malvids</taxon>
        <taxon>Brassicales</taxon>
        <taxon>Brassicaceae</taxon>
        <taxon>Camelineae</taxon>
        <taxon>Arabidopsis</taxon>
    </lineage>
</organism>
<dbReference type="EMBL" id="AC022288">
    <property type="protein sequence ID" value="AAG52208.1"/>
    <property type="molecule type" value="Genomic_DNA"/>
</dbReference>
<dbReference type="EMBL" id="CP002684">
    <property type="protein sequence ID" value="AEE31638.1"/>
    <property type="molecule type" value="Genomic_DNA"/>
</dbReference>
<dbReference type="PIR" id="G86462">
    <property type="entry name" value="G86462"/>
</dbReference>
<dbReference type="RefSeq" id="NP_174652.1">
    <molecule id="Q9C8U7-1"/>
    <property type="nucleotide sequence ID" value="NM_103112.1"/>
</dbReference>
<dbReference type="SMR" id="Q9C8U7"/>
<dbReference type="FunCoup" id="Q9C8U7">
    <property type="interactions" value="48"/>
</dbReference>
<dbReference type="STRING" id="3702.Q9C8U7"/>
<dbReference type="GlyGen" id="Q9C8U7">
    <property type="glycosylation" value="1 site"/>
</dbReference>
<dbReference type="PaxDb" id="3702-AT1G33900.1"/>
<dbReference type="ProteomicsDB" id="232166">
    <molecule id="Q9C8U7-1"/>
</dbReference>
<dbReference type="EnsemblPlants" id="AT1G33900.1">
    <molecule id="Q9C8U7-1"/>
    <property type="protein sequence ID" value="AT1G33900.1"/>
    <property type="gene ID" value="AT1G33900"/>
</dbReference>
<dbReference type="GeneID" id="840287"/>
<dbReference type="Gramene" id="AT1G33900.1">
    <molecule id="Q9C8U7-1"/>
    <property type="protein sequence ID" value="AT1G33900.1"/>
    <property type="gene ID" value="AT1G33900"/>
</dbReference>
<dbReference type="KEGG" id="ath:AT1G33900"/>
<dbReference type="Araport" id="AT1G33900"/>
<dbReference type="TAIR" id="AT1G33900">
    <property type="gene designation" value="IAN4"/>
</dbReference>
<dbReference type="eggNOG" id="ENOG502R7PE">
    <property type="taxonomic scope" value="Eukaryota"/>
</dbReference>
<dbReference type="HOGENOM" id="CLU_010468_0_1_1"/>
<dbReference type="InParanoid" id="Q9C8U7"/>
<dbReference type="OMA" id="CGGQVCA"/>
<dbReference type="OrthoDB" id="1071369at2759"/>
<dbReference type="PhylomeDB" id="Q9C8U7"/>
<dbReference type="PRO" id="PR:Q9C8U7"/>
<dbReference type="Proteomes" id="UP000006548">
    <property type="component" value="Chromosome 1"/>
</dbReference>
<dbReference type="ExpressionAtlas" id="Q9C8U7">
    <property type="expression patterns" value="differential"/>
</dbReference>
<dbReference type="GO" id="GO:0005783">
    <property type="term" value="C:endoplasmic reticulum"/>
    <property type="evidence" value="ECO:0000314"/>
    <property type="project" value="TAIR"/>
</dbReference>
<dbReference type="GO" id="GO:0005886">
    <property type="term" value="C:plasma membrane"/>
    <property type="evidence" value="ECO:0000314"/>
    <property type="project" value="TAIR"/>
</dbReference>
<dbReference type="GO" id="GO:0005525">
    <property type="term" value="F:GTP binding"/>
    <property type="evidence" value="ECO:0007669"/>
    <property type="project" value="UniProtKB-KW"/>
</dbReference>
<dbReference type="GO" id="GO:0034605">
    <property type="term" value="P:cellular response to heat"/>
    <property type="evidence" value="ECO:0000316"/>
    <property type="project" value="TAIR"/>
</dbReference>
<dbReference type="GO" id="GO:0030968">
    <property type="term" value="P:endoplasmic reticulum unfolded protein response"/>
    <property type="evidence" value="ECO:0000316"/>
    <property type="project" value="TAIR"/>
</dbReference>
<dbReference type="CDD" id="cd01852">
    <property type="entry name" value="AIG1"/>
    <property type="match status" value="1"/>
</dbReference>
<dbReference type="FunFam" id="3.40.50.300:FF:000840">
    <property type="entry name" value="Immune-associated nucleotide-binding protein 9"/>
    <property type="match status" value="1"/>
</dbReference>
<dbReference type="Gene3D" id="3.40.50.300">
    <property type="entry name" value="P-loop containing nucleotide triphosphate hydrolases"/>
    <property type="match status" value="1"/>
</dbReference>
<dbReference type="InterPro" id="IPR006703">
    <property type="entry name" value="G_AIG1"/>
</dbReference>
<dbReference type="InterPro" id="IPR045058">
    <property type="entry name" value="GIMA/IAN/Toc"/>
</dbReference>
<dbReference type="InterPro" id="IPR027417">
    <property type="entry name" value="P-loop_NTPase"/>
</dbReference>
<dbReference type="PANTHER" id="PTHR10903:SF146">
    <property type="entry name" value="AIG1-LIKE PROTEIN_ 48352-49494-RELATED"/>
    <property type="match status" value="1"/>
</dbReference>
<dbReference type="PANTHER" id="PTHR10903">
    <property type="entry name" value="GTPASE, IMAP FAMILY MEMBER-RELATED"/>
    <property type="match status" value="1"/>
</dbReference>
<dbReference type="Pfam" id="PF04548">
    <property type="entry name" value="AIG1"/>
    <property type="match status" value="1"/>
</dbReference>
<dbReference type="SUPFAM" id="SSF52540">
    <property type="entry name" value="P-loop containing nucleoside triphosphate hydrolases"/>
    <property type="match status" value="1"/>
</dbReference>
<dbReference type="PROSITE" id="PS51720">
    <property type="entry name" value="G_AIG1"/>
    <property type="match status" value="1"/>
</dbReference>
<proteinExistence type="inferred from homology"/>
<evidence type="ECO:0000250" key="1">
    <source>
        <dbReference type="UniProtKB" id="Q8NHV1"/>
    </source>
</evidence>
<evidence type="ECO:0000255" key="2"/>
<evidence type="ECO:0000255" key="3">
    <source>
        <dbReference type="PROSITE-ProRule" id="PRU01057"/>
    </source>
</evidence>
<evidence type="ECO:0000303" key="4">
    <source>
    </source>
</evidence>
<evidence type="ECO:0000305" key="5"/>
<evidence type="ECO:0000305" key="6">
    <source>
    </source>
</evidence>
<evidence type="ECO:0000312" key="7">
    <source>
        <dbReference type="Araport" id="AT1G33900"/>
    </source>
</evidence>
<evidence type="ECO:0000312" key="8">
    <source>
        <dbReference type="EMBL" id="AAG52208.1"/>
    </source>
</evidence>
<reference key="1">
    <citation type="journal article" date="2000" name="Nature">
        <title>Sequence and analysis of chromosome 1 of the plant Arabidopsis thaliana.</title>
        <authorList>
            <person name="Theologis A."/>
            <person name="Ecker J.R."/>
            <person name="Palm C.J."/>
            <person name="Federspiel N.A."/>
            <person name="Kaul S."/>
            <person name="White O."/>
            <person name="Alonso J."/>
            <person name="Altafi H."/>
            <person name="Araujo R."/>
            <person name="Bowman C.L."/>
            <person name="Brooks S.Y."/>
            <person name="Buehler E."/>
            <person name="Chan A."/>
            <person name="Chao Q."/>
            <person name="Chen H."/>
            <person name="Cheuk R.F."/>
            <person name="Chin C.W."/>
            <person name="Chung M.K."/>
            <person name="Conn L."/>
            <person name="Conway A.B."/>
            <person name="Conway A.R."/>
            <person name="Creasy T.H."/>
            <person name="Dewar K."/>
            <person name="Dunn P."/>
            <person name="Etgu P."/>
            <person name="Feldblyum T.V."/>
            <person name="Feng J.-D."/>
            <person name="Fong B."/>
            <person name="Fujii C.Y."/>
            <person name="Gill J.E."/>
            <person name="Goldsmith A.D."/>
            <person name="Haas B."/>
            <person name="Hansen N.F."/>
            <person name="Hughes B."/>
            <person name="Huizar L."/>
            <person name="Hunter J.L."/>
            <person name="Jenkins J."/>
            <person name="Johnson-Hopson C."/>
            <person name="Khan S."/>
            <person name="Khaykin E."/>
            <person name="Kim C.J."/>
            <person name="Koo H.L."/>
            <person name="Kremenetskaia I."/>
            <person name="Kurtz D.B."/>
            <person name="Kwan A."/>
            <person name="Lam B."/>
            <person name="Langin-Hooper S."/>
            <person name="Lee A."/>
            <person name="Lee J.M."/>
            <person name="Lenz C.A."/>
            <person name="Li J.H."/>
            <person name="Li Y.-P."/>
            <person name="Lin X."/>
            <person name="Liu S.X."/>
            <person name="Liu Z.A."/>
            <person name="Luros J.S."/>
            <person name="Maiti R."/>
            <person name="Marziali A."/>
            <person name="Militscher J."/>
            <person name="Miranda M."/>
            <person name="Nguyen M."/>
            <person name="Nierman W.C."/>
            <person name="Osborne B.I."/>
            <person name="Pai G."/>
            <person name="Peterson J."/>
            <person name="Pham P.K."/>
            <person name="Rizzo M."/>
            <person name="Rooney T."/>
            <person name="Rowley D."/>
            <person name="Sakano H."/>
            <person name="Salzberg S.L."/>
            <person name="Schwartz J.R."/>
            <person name="Shinn P."/>
            <person name="Southwick A.M."/>
            <person name="Sun H."/>
            <person name="Tallon L.J."/>
            <person name="Tambunga G."/>
            <person name="Toriumi M.J."/>
            <person name="Town C.D."/>
            <person name="Utterback T."/>
            <person name="Van Aken S."/>
            <person name="Vaysberg M."/>
            <person name="Vysotskaia V.S."/>
            <person name="Walker M."/>
            <person name="Wu D."/>
            <person name="Yu G."/>
            <person name="Fraser C.M."/>
            <person name="Venter J.C."/>
            <person name="Davis R.W."/>
        </authorList>
    </citation>
    <scope>NUCLEOTIDE SEQUENCE [LARGE SCALE GENOMIC DNA]</scope>
    <source>
        <strain>cv. Columbia</strain>
    </source>
</reference>
<reference key="2">
    <citation type="journal article" date="2017" name="Plant J.">
        <title>Araport11: a complete reannotation of the Arabidopsis thaliana reference genome.</title>
        <authorList>
            <person name="Cheng C.Y."/>
            <person name="Krishnakumar V."/>
            <person name="Chan A.P."/>
            <person name="Thibaud-Nissen F."/>
            <person name="Schobel S."/>
            <person name="Town C.D."/>
        </authorList>
    </citation>
    <scope>GENOME REANNOTATION</scope>
    <source>
        <strain>cv. Columbia</strain>
    </source>
</reference>
<reference key="3">
    <citation type="journal article" date="2008" name="J. Plant Physiol.">
        <title>Computational identification and analysis of immune-associated nucleotide gene family in Arabidopsis thaliana.</title>
        <authorList>
            <person name="Liu C."/>
            <person name="Wang T."/>
            <person name="Zhang W."/>
            <person name="Li X."/>
        </authorList>
    </citation>
    <scope>GENE FAMILY</scope>
    <scope>NOMENCLATURE</scope>
</reference>